<gene>
    <name evidence="1" type="primary">pheS</name>
    <name type="ordered locus">LBJ_2895</name>
</gene>
<sequence length="341" mass="38665">MNLSEELDSIYQEAIQKIGSSISEEDLDKNKNDFIGKKGKLTAVLKNVALLSIEEKKTIGQKANELSKKLENFVVETKSSLKKKLFETQAASEFFDSLRPLPNASNGSLHPITQIQYEIEDIFTSMGFSIMDGPEIETDTNNFGALNFTDDHPAREMQDTFYLENGNLLRTHTSAIQVRTLRKLKPPFRIIAPGRVFRYEEVDASHEHTFYQIEGMVVGKDISAANLIDTMQVLLSRIFEKEIKTRLRPGYFPFVEPGFELDINCLVCEGKGCPVCKQSGWLELLPCGLIHPNVLSHAGLDPKEWTGFAFGLGLDRLVMMRYGIHDIRYFQSGNLRFLKQF</sequence>
<proteinExistence type="inferred from homology"/>
<accession>Q04P74</accession>
<evidence type="ECO:0000255" key="1">
    <source>
        <dbReference type="HAMAP-Rule" id="MF_00281"/>
    </source>
</evidence>
<keyword id="KW-0030">Aminoacyl-tRNA synthetase</keyword>
<keyword id="KW-0067">ATP-binding</keyword>
<keyword id="KW-0963">Cytoplasm</keyword>
<keyword id="KW-0436">Ligase</keyword>
<keyword id="KW-0460">Magnesium</keyword>
<keyword id="KW-0479">Metal-binding</keyword>
<keyword id="KW-0547">Nucleotide-binding</keyword>
<keyword id="KW-0648">Protein biosynthesis</keyword>
<protein>
    <recommendedName>
        <fullName evidence="1">Phenylalanine--tRNA ligase alpha subunit</fullName>
        <ecNumber evidence="1">6.1.1.20</ecNumber>
    </recommendedName>
    <alternativeName>
        <fullName evidence="1">Phenylalanyl-tRNA synthetase alpha subunit</fullName>
        <shortName evidence="1">PheRS</shortName>
    </alternativeName>
</protein>
<dbReference type="EC" id="6.1.1.20" evidence="1"/>
<dbReference type="EMBL" id="CP000350">
    <property type="protein sequence ID" value="ABJ77296.1"/>
    <property type="molecule type" value="Genomic_DNA"/>
</dbReference>
<dbReference type="RefSeq" id="WP_002724720.1">
    <property type="nucleotide sequence ID" value="NC_008510.1"/>
</dbReference>
<dbReference type="SMR" id="Q04P74"/>
<dbReference type="GeneID" id="61175341"/>
<dbReference type="KEGG" id="lbj:LBJ_2895"/>
<dbReference type="HOGENOM" id="CLU_025086_0_1_12"/>
<dbReference type="Proteomes" id="UP000000656">
    <property type="component" value="Chromosome 1"/>
</dbReference>
<dbReference type="GO" id="GO:0005737">
    <property type="term" value="C:cytoplasm"/>
    <property type="evidence" value="ECO:0007669"/>
    <property type="project" value="UniProtKB-SubCell"/>
</dbReference>
<dbReference type="GO" id="GO:0005524">
    <property type="term" value="F:ATP binding"/>
    <property type="evidence" value="ECO:0007669"/>
    <property type="project" value="UniProtKB-UniRule"/>
</dbReference>
<dbReference type="GO" id="GO:0000287">
    <property type="term" value="F:magnesium ion binding"/>
    <property type="evidence" value="ECO:0007669"/>
    <property type="project" value="UniProtKB-UniRule"/>
</dbReference>
<dbReference type="GO" id="GO:0004826">
    <property type="term" value="F:phenylalanine-tRNA ligase activity"/>
    <property type="evidence" value="ECO:0007669"/>
    <property type="project" value="UniProtKB-UniRule"/>
</dbReference>
<dbReference type="GO" id="GO:0000049">
    <property type="term" value="F:tRNA binding"/>
    <property type="evidence" value="ECO:0007669"/>
    <property type="project" value="InterPro"/>
</dbReference>
<dbReference type="GO" id="GO:0006432">
    <property type="term" value="P:phenylalanyl-tRNA aminoacylation"/>
    <property type="evidence" value="ECO:0007669"/>
    <property type="project" value="UniProtKB-UniRule"/>
</dbReference>
<dbReference type="CDD" id="cd00496">
    <property type="entry name" value="PheRS_alpha_core"/>
    <property type="match status" value="1"/>
</dbReference>
<dbReference type="FunFam" id="3.30.930.10:FF:000089">
    <property type="entry name" value="Phenylalanine--tRNA ligase alpha subunit"/>
    <property type="match status" value="1"/>
</dbReference>
<dbReference type="Gene3D" id="3.30.930.10">
    <property type="entry name" value="Bira Bifunctional Protein, Domain 2"/>
    <property type="match status" value="1"/>
</dbReference>
<dbReference type="HAMAP" id="MF_00281">
    <property type="entry name" value="Phe_tRNA_synth_alpha1"/>
    <property type="match status" value="1"/>
</dbReference>
<dbReference type="InterPro" id="IPR006195">
    <property type="entry name" value="aa-tRNA-synth_II"/>
</dbReference>
<dbReference type="InterPro" id="IPR045864">
    <property type="entry name" value="aa-tRNA-synth_II/BPL/LPL"/>
</dbReference>
<dbReference type="InterPro" id="IPR004529">
    <property type="entry name" value="Phe-tRNA-synth_IIc_asu"/>
</dbReference>
<dbReference type="InterPro" id="IPR004188">
    <property type="entry name" value="Phe-tRNA_ligase_II_N"/>
</dbReference>
<dbReference type="InterPro" id="IPR022911">
    <property type="entry name" value="Phe_tRNA_ligase_alpha1_bac"/>
</dbReference>
<dbReference type="InterPro" id="IPR002319">
    <property type="entry name" value="Phenylalanyl-tRNA_Synthase"/>
</dbReference>
<dbReference type="InterPro" id="IPR010978">
    <property type="entry name" value="tRNA-bd_arm"/>
</dbReference>
<dbReference type="NCBIfam" id="TIGR00468">
    <property type="entry name" value="pheS"/>
    <property type="match status" value="1"/>
</dbReference>
<dbReference type="PANTHER" id="PTHR11538:SF41">
    <property type="entry name" value="PHENYLALANINE--TRNA LIGASE, MITOCHONDRIAL"/>
    <property type="match status" value="1"/>
</dbReference>
<dbReference type="PANTHER" id="PTHR11538">
    <property type="entry name" value="PHENYLALANYL-TRNA SYNTHETASE"/>
    <property type="match status" value="1"/>
</dbReference>
<dbReference type="Pfam" id="PF02912">
    <property type="entry name" value="Phe_tRNA-synt_N"/>
    <property type="match status" value="1"/>
</dbReference>
<dbReference type="Pfam" id="PF01409">
    <property type="entry name" value="tRNA-synt_2d"/>
    <property type="match status" value="1"/>
</dbReference>
<dbReference type="SUPFAM" id="SSF55681">
    <property type="entry name" value="Class II aaRS and biotin synthetases"/>
    <property type="match status" value="1"/>
</dbReference>
<dbReference type="SUPFAM" id="SSF46589">
    <property type="entry name" value="tRNA-binding arm"/>
    <property type="match status" value="1"/>
</dbReference>
<dbReference type="PROSITE" id="PS50862">
    <property type="entry name" value="AA_TRNA_LIGASE_II"/>
    <property type="match status" value="1"/>
</dbReference>
<organism>
    <name type="scientific">Leptospira borgpetersenii serovar Hardjo-bovis (strain JB197)</name>
    <dbReference type="NCBI Taxonomy" id="355277"/>
    <lineage>
        <taxon>Bacteria</taxon>
        <taxon>Pseudomonadati</taxon>
        <taxon>Spirochaetota</taxon>
        <taxon>Spirochaetia</taxon>
        <taxon>Leptospirales</taxon>
        <taxon>Leptospiraceae</taxon>
        <taxon>Leptospira</taxon>
    </lineage>
</organism>
<name>SYFA_LEPBJ</name>
<comment type="catalytic activity">
    <reaction evidence="1">
        <text>tRNA(Phe) + L-phenylalanine + ATP = L-phenylalanyl-tRNA(Phe) + AMP + diphosphate + H(+)</text>
        <dbReference type="Rhea" id="RHEA:19413"/>
        <dbReference type="Rhea" id="RHEA-COMP:9668"/>
        <dbReference type="Rhea" id="RHEA-COMP:9699"/>
        <dbReference type="ChEBI" id="CHEBI:15378"/>
        <dbReference type="ChEBI" id="CHEBI:30616"/>
        <dbReference type="ChEBI" id="CHEBI:33019"/>
        <dbReference type="ChEBI" id="CHEBI:58095"/>
        <dbReference type="ChEBI" id="CHEBI:78442"/>
        <dbReference type="ChEBI" id="CHEBI:78531"/>
        <dbReference type="ChEBI" id="CHEBI:456215"/>
        <dbReference type="EC" id="6.1.1.20"/>
    </reaction>
</comment>
<comment type="cofactor">
    <cofactor evidence="1">
        <name>Mg(2+)</name>
        <dbReference type="ChEBI" id="CHEBI:18420"/>
    </cofactor>
    <text evidence="1">Binds 2 magnesium ions per tetramer.</text>
</comment>
<comment type="subunit">
    <text evidence="1">Tetramer of two alpha and two beta subunits.</text>
</comment>
<comment type="subcellular location">
    <subcellularLocation>
        <location evidence="1">Cytoplasm</location>
    </subcellularLocation>
</comment>
<comment type="similarity">
    <text evidence="1">Belongs to the class-II aminoacyl-tRNA synthetase family. Phe-tRNA synthetase alpha subunit type 1 subfamily.</text>
</comment>
<reference key="1">
    <citation type="journal article" date="2006" name="Proc. Natl. Acad. Sci. U.S.A.">
        <title>Genome reduction in Leptospira borgpetersenii reflects limited transmission potential.</title>
        <authorList>
            <person name="Bulach D.M."/>
            <person name="Zuerner R.L."/>
            <person name="Wilson P."/>
            <person name="Seemann T."/>
            <person name="McGrath A."/>
            <person name="Cullen P.A."/>
            <person name="Davis J."/>
            <person name="Johnson M."/>
            <person name="Kuczek E."/>
            <person name="Alt D.P."/>
            <person name="Peterson-Burch B."/>
            <person name="Coppel R.L."/>
            <person name="Rood J.I."/>
            <person name="Davies J.K."/>
            <person name="Adler B."/>
        </authorList>
    </citation>
    <scope>NUCLEOTIDE SEQUENCE [LARGE SCALE GENOMIC DNA]</scope>
    <source>
        <strain>JB197</strain>
    </source>
</reference>
<feature type="chain" id="PRO_1000006855" description="Phenylalanine--tRNA ligase alpha subunit">
    <location>
        <begin position="1"/>
        <end position="341"/>
    </location>
</feature>
<feature type="binding site" evidence="1">
    <location>
        <position position="256"/>
    </location>
    <ligand>
        <name>Mg(2+)</name>
        <dbReference type="ChEBI" id="CHEBI:18420"/>
        <note>shared with beta subunit</note>
    </ligand>
</feature>